<reference key="1">
    <citation type="journal article" date="2007" name="PLoS ONE">
        <title>The complete genome sequence and analysis of the Epsilonproteobacterium Arcobacter butzleri.</title>
        <authorList>
            <person name="Miller W.G."/>
            <person name="Parker C.T."/>
            <person name="Rubenfield M."/>
            <person name="Mendz G.L."/>
            <person name="Woesten M.M.S.M."/>
            <person name="Ussery D.W."/>
            <person name="Stolz J.F."/>
            <person name="Binnewies T.T."/>
            <person name="Hallin P.F."/>
            <person name="Wang G."/>
            <person name="Malek J.A."/>
            <person name="Rogosin A."/>
            <person name="Stanker L.H."/>
            <person name="Mandrell R.E."/>
        </authorList>
    </citation>
    <scope>NUCLEOTIDE SEQUENCE [LARGE SCALE GENOMIC DNA]</scope>
    <source>
        <strain>RM4018</strain>
    </source>
</reference>
<organism>
    <name type="scientific">Aliarcobacter butzleri (strain RM4018)</name>
    <name type="common">Arcobacter butzleri</name>
    <dbReference type="NCBI Taxonomy" id="367737"/>
    <lineage>
        <taxon>Bacteria</taxon>
        <taxon>Pseudomonadati</taxon>
        <taxon>Campylobacterota</taxon>
        <taxon>Epsilonproteobacteria</taxon>
        <taxon>Campylobacterales</taxon>
        <taxon>Arcobacteraceae</taxon>
        <taxon>Aliarcobacter</taxon>
    </lineage>
</organism>
<sequence length="127" mass="14119">MPTINQLVRKERKKVIDKSKSPALKKCPQRRGVCTRVYTTTPKKPNSALRKVAKVRLTTGFEVISYIGGEGHNLQEHSIVLVRGGRVKDLPGVKYHIVRGALDTAGVNNRTVSRSKYGTKRPKAAKK</sequence>
<keyword id="KW-0488">Methylation</keyword>
<keyword id="KW-1185">Reference proteome</keyword>
<keyword id="KW-0687">Ribonucleoprotein</keyword>
<keyword id="KW-0689">Ribosomal protein</keyword>
<keyword id="KW-0694">RNA-binding</keyword>
<keyword id="KW-0699">rRNA-binding</keyword>
<keyword id="KW-0820">tRNA-binding</keyword>
<evidence type="ECO:0000250" key="1"/>
<evidence type="ECO:0000255" key="2">
    <source>
        <dbReference type="HAMAP-Rule" id="MF_00403"/>
    </source>
</evidence>
<evidence type="ECO:0000305" key="3"/>
<feature type="chain" id="PRO_1000060811" description="Small ribosomal subunit protein uS12">
    <location>
        <begin position="1"/>
        <end position="127"/>
    </location>
</feature>
<feature type="modified residue" description="3-methylthioaspartic acid" evidence="1">
    <location>
        <position position="89"/>
    </location>
</feature>
<dbReference type="EMBL" id="CP000361">
    <property type="protein sequence ID" value="ABV68211.1"/>
    <property type="molecule type" value="Genomic_DNA"/>
</dbReference>
<dbReference type="RefSeq" id="WP_012147885.1">
    <property type="nucleotide sequence ID" value="NC_009850.1"/>
</dbReference>
<dbReference type="SMR" id="A8EW88"/>
<dbReference type="STRING" id="367737.Abu_1989"/>
<dbReference type="GeneID" id="24304802"/>
<dbReference type="KEGG" id="abu:Abu_1989"/>
<dbReference type="eggNOG" id="COG0048">
    <property type="taxonomic scope" value="Bacteria"/>
</dbReference>
<dbReference type="HOGENOM" id="CLU_104295_1_2_7"/>
<dbReference type="Proteomes" id="UP000001136">
    <property type="component" value="Chromosome"/>
</dbReference>
<dbReference type="GO" id="GO:0015935">
    <property type="term" value="C:small ribosomal subunit"/>
    <property type="evidence" value="ECO:0007669"/>
    <property type="project" value="InterPro"/>
</dbReference>
<dbReference type="GO" id="GO:0019843">
    <property type="term" value="F:rRNA binding"/>
    <property type="evidence" value="ECO:0007669"/>
    <property type="project" value="UniProtKB-UniRule"/>
</dbReference>
<dbReference type="GO" id="GO:0003735">
    <property type="term" value="F:structural constituent of ribosome"/>
    <property type="evidence" value="ECO:0007669"/>
    <property type="project" value="InterPro"/>
</dbReference>
<dbReference type="GO" id="GO:0000049">
    <property type="term" value="F:tRNA binding"/>
    <property type="evidence" value="ECO:0007669"/>
    <property type="project" value="UniProtKB-UniRule"/>
</dbReference>
<dbReference type="GO" id="GO:0006412">
    <property type="term" value="P:translation"/>
    <property type="evidence" value="ECO:0007669"/>
    <property type="project" value="UniProtKB-UniRule"/>
</dbReference>
<dbReference type="CDD" id="cd03368">
    <property type="entry name" value="Ribosomal_S12"/>
    <property type="match status" value="1"/>
</dbReference>
<dbReference type="FunFam" id="2.40.50.140:FF:000001">
    <property type="entry name" value="30S ribosomal protein S12"/>
    <property type="match status" value="1"/>
</dbReference>
<dbReference type="Gene3D" id="2.40.50.140">
    <property type="entry name" value="Nucleic acid-binding proteins"/>
    <property type="match status" value="1"/>
</dbReference>
<dbReference type="HAMAP" id="MF_00403_B">
    <property type="entry name" value="Ribosomal_uS12_B"/>
    <property type="match status" value="1"/>
</dbReference>
<dbReference type="InterPro" id="IPR012340">
    <property type="entry name" value="NA-bd_OB-fold"/>
</dbReference>
<dbReference type="InterPro" id="IPR006032">
    <property type="entry name" value="Ribosomal_uS12"/>
</dbReference>
<dbReference type="InterPro" id="IPR005679">
    <property type="entry name" value="Ribosomal_uS12_bac"/>
</dbReference>
<dbReference type="NCBIfam" id="TIGR00981">
    <property type="entry name" value="rpsL_bact"/>
    <property type="match status" value="1"/>
</dbReference>
<dbReference type="PANTHER" id="PTHR11652">
    <property type="entry name" value="30S RIBOSOMAL PROTEIN S12 FAMILY MEMBER"/>
    <property type="match status" value="1"/>
</dbReference>
<dbReference type="Pfam" id="PF00164">
    <property type="entry name" value="Ribosom_S12_S23"/>
    <property type="match status" value="1"/>
</dbReference>
<dbReference type="PIRSF" id="PIRSF002133">
    <property type="entry name" value="Ribosomal_S12/S23"/>
    <property type="match status" value="1"/>
</dbReference>
<dbReference type="PRINTS" id="PR01034">
    <property type="entry name" value="RIBOSOMALS12"/>
</dbReference>
<dbReference type="SUPFAM" id="SSF50249">
    <property type="entry name" value="Nucleic acid-binding proteins"/>
    <property type="match status" value="1"/>
</dbReference>
<dbReference type="PROSITE" id="PS00055">
    <property type="entry name" value="RIBOSOMAL_S12"/>
    <property type="match status" value="1"/>
</dbReference>
<name>RS12_ALIB4</name>
<comment type="function">
    <text evidence="2">With S4 and S5 plays an important role in translational accuracy.</text>
</comment>
<comment type="function">
    <text evidence="2">Interacts with and stabilizes bases of the 16S rRNA that are involved in tRNA selection in the A site and with the mRNA backbone. Located at the interface of the 30S and 50S subunits, it traverses the body of the 30S subunit contacting proteins on the other side and probably holding the rRNA structure together. The combined cluster of proteins S8, S12 and S17 appears to hold together the shoulder and platform of the 30S subunit.</text>
</comment>
<comment type="subunit">
    <text evidence="2">Part of the 30S ribosomal subunit. Contacts proteins S8 and S17. May interact with IF1 in the 30S initiation complex.</text>
</comment>
<comment type="similarity">
    <text evidence="2">Belongs to the universal ribosomal protein uS12 family.</text>
</comment>
<accession>A8EW88</accession>
<gene>
    <name evidence="2" type="primary">rpsL</name>
    <name type="ordered locus">Abu_1989</name>
</gene>
<proteinExistence type="inferred from homology"/>
<protein>
    <recommendedName>
        <fullName evidence="2">Small ribosomal subunit protein uS12</fullName>
    </recommendedName>
    <alternativeName>
        <fullName evidence="3">30S ribosomal protein S12</fullName>
    </alternativeName>
</protein>